<feature type="signal peptide" evidence="11">
    <location>
        <begin position="1"/>
        <end position="17"/>
    </location>
</feature>
<feature type="chain" id="PRO_0000031044" description="Major royal jelly protein 2">
    <location>
        <begin position="18"/>
        <end position="452"/>
    </location>
</feature>
<feature type="region of interest" description="Disordered" evidence="2">
    <location>
        <begin position="416"/>
        <end position="452"/>
    </location>
</feature>
<feature type="glycosylation site" description="N-linked (GlcNAc...) asparagine" evidence="1">
    <location>
        <position position="145"/>
    </location>
</feature>
<feature type="glycosylation site" description="N-linked (GlcNAc...) asparagine" evidence="1">
    <location>
        <position position="178"/>
    </location>
</feature>
<feature type="sequence conflict" description="In Ref. 5; XP_026299315." evidence="15" ref="5">
    <original>G</original>
    <variation>D</variation>
    <location>
        <position position="96"/>
    </location>
</feature>
<dbReference type="EMBL" id="AF000632">
    <property type="protein sequence ID" value="AAC61894.1"/>
    <property type="molecule type" value="mRNA"/>
</dbReference>
<dbReference type="EMBL" id="GQ160519">
    <property type="protein sequence ID" value="ACS66837.1"/>
    <property type="molecule type" value="mRNA"/>
</dbReference>
<dbReference type="RefSeq" id="NP_001011580.1">
    <property type="nucleotide sequence ID" value="NM_001011580.1"/>
</dbReference>
<dbReference type="SMR" id="O77061"/>
<dbReference type="STRING" id="7460.O77061"/>
<dbReference type="Allergome" id="7628">
    <property type="allergen name" value="Api m Apalbumin 2"/>
</dbReference>
<dbReference type="GlyCosmos" id="O77061">
    <property type="glycosylation" value="2 sites, No reported glycans"/>
</dbReference>
<dbReference type="PaxDb" id="7460-GB55212-PA"/>
<dbReference type="EnsemblMetazoa" id="NM_001011580">
    <property type="protein sequence ID" value="NP_001011580"/>
    <property type="gene ID" value="GeneID_406091"/>
</dbReference>
<dbReference type="GeneID" id="406091"/>
<dbReference type="KEGG" id="ame:406091"/>
<dbReference type="CTD" id="406091"/>
<dbReference type="eggNOG" id="ENOG502SCJK">
    <property type="taxonomic scope" value="Eukaryota"/>
</dbReference>
<dbReference type="InParanoid" id="O77061"/>
<dbReference type="OrthoDB" id="8184345at2759"/>
<dbReference type="PhylomeDB" id="O77061"/>
<dbReference type="Proteomes" id="UP000005203">
    <property type="component" value="Linkage group LG11"/>
</dbReference>
<dbReference type="GO" id="GO:0005576">
    <property type="term" value="C:extracellular region"/>
    <property type="evidence" value="ECO:0007669"/>
    <property type="project" value="UniProtKB-SubCell"/>
</dbReference>
<dbReference type="Gene3D" id="2.120.10.30">
    <property type="entry name" value="TolB, C-terminal domain"/>
    <property type="match status" value="1"/>
</dbReference>
<dbReference type="InterPro" id="IPR011042">
    <property type="entry name" value="6-blade_b-propeller_TolB-like"/>
</dbReference>
<dbReference type="InterPro" id="IPR017996">
    <property type="entry name" value="Royal_jelly/protein_yellow"/>
</dbReference>
<dbReference type="PANTHER" id="PTHR10009:SF7">
    <property type="entry name" value="GH10609P-RELATED"/>
    <property type="match status" value="1"/>
</dbReference>
<dbReference type="PANTHER" id="PTHR10009">
    <property type="entry name" value="PROTEIN YELLOW-RELATED"/>
    <property type="match status" value="1"/>
</dbReference>
<dbReference type="Pfam" id="PF03022">
    <property type="entry name" value="MRJP"/>
    <property type="match status" value="1"/>
</dbReference>
<dbReference type="PRINTS" id="PR01366">
    <property type="entry name" value="ROYALJELLY"/>
</dbReference>
<dbReference type="SUPFAM" id="SSF101898">
    <property type="entry name" value="NHL repeat"/>
    <property type="match status" value="1"/>
</dbReference>
<organism evidence="17">
    <name type="scientific">Apis mellifera</name>
    <name type="common">Honeybee</name>
    <dbReference type="NCBI Taxonomy" id="7460"/>
    <lineage>
        <taxon>Eukaryota</taxon>
        <taxon>Metazoa</taxon>
        <taxon>Ecdysozoa</taxon>
        <taxon>Arthropoda</taxon>
        <taxon>Hexapoda</taxon>
        <taxon>Insecta</taxon>
        <taxon>Pterygota</taxon>
        <taxon>Neoptera</taxon>
        <taxon>Endopterygota</taxon>
        <taxon>Hymenoptera</taxon>
        <taxon>Apocrita</taxon>
        <taxon>Aculeata</taxon>
        <taxon>Apoidea</taxon>
        <taxon>Anthophila</taxon>
        <taxon>Apidae</taxon>
        <taxon>Apis</taxon>
    </lineage>
</organism>
<proteinExistence type="evidence at protein level"/>
<gene>
    <name evidence="13" type="primary">Mrjp2</name>
    <name type="synonym">406091</name>
    <name evidence="13" type="synonym">GB16246</name>
</gene>
<evidence type="ECO:0000255" key="1"/>
<evidence type="ECO:0000256" key="2">
    <source>
        <dbReference type="SAM" id="MobiDB-lite"/>
    </source>
</evidence>
<evidence type="ECO:0000269" key="3">
    <source>
    </source>
</evidence>
<evidence type="ECO:0000269" key="4">
    <source>
    </source>
</evidence>
<evidence type="ECO:0000269" key="5">
    <source>
    </source>
</evidence>
<evidence type="ECO:0000269" key="6">
    <source>
    </source>
</evidence>
<evidence type="ECO:0000269" key="7">
    <source>
    </source>
</evidence>
<evidence type="ECO:0000269" key="8">
    <source>
    </source>
</evidence>
<evidence type="ECO:0000269" key="9">
    <source>
    </source>
</evidence>
<evidence type="ECO:0000269" key="10">
    <source>
    </source>
</evidence>
<evidence type="ECO:0000269" key="11">
    <source>
    </source>
</evidence>
<evidence type="ECO:0000303" key="12">
    <source>
    </source>
</evidence>
<evidence type="ECO:0000303" key="13">
    <source>
    </source>
</evidence>
<evidence type="ECO:0000303" key="14">
    <source>
    </source>
</evidence>
<evidence type="ECO:0000305" key="15"/>
<evidence type="ECO:0000305" key="16">
    <source>
    </source>
</evidence>
<evidence type="ECO:0000312" key="17">
    <source>
        <dbReference type="Proteomes" id="UP000005203"/>
    </source>
</evidence>
<keyword id="KW-0903">Direct protein sequencing</keyword>
<keyword id="KW-0325">Glycoprotein</keyword>
<keyword id="KW-1185">Reference proteome</keyword>
<keyword id="KW-0964">Secreted</keyword>
<keyword id="KW-0732">Signal</keyword>
<reference key="1">
    <citation type="journal article" date="1998" name="Cell. Mol. Life Sci.">
        <title>A family of major royal jelly proteins of the honeybee Apis mellifera L.</title>
        <authorList>
            <person name="Schmitzova J."/>
            <person name="Klaudiny J."/>
            <person name="Albert S."/>
            <person name="Schroeder W."/>
            <person name="Schreckengost W."/>
            <person name="Hanes J."/>
            <person name="Judova J."/>
            <person name="Simuth J."/>
        </authorList>
    </citation>
    <scope>NUCLEOTIDE SEQUENCE [MRNA]</scope>
    <scope>PROTEIN SEQUENCE OF 18-30</scope>
    <scope>FUNCTION</scope>
    <scope>SUBCELLULAR LOCATION</scope>
    <source>
        <tissue>Head</tissue>
    </source>
</reference>
<reference key="2">
    <citation type="journal article" date="2004" name="J. Insect Physiol.">
        <title>The MRJP/YELLOW protein family of Apis mellifera: identification of new members in the EST library.</title>
        <authorList>
            <person name="Albert S."/>
            <person name="Klaudiny J."/>
        </authorList>
    </citation>
    <scope>NUCLEOTIDE SEQUENCE [MRNA]</scope>
</reference>
<reference key="3">
    <citation type="submission" date="2009-05" db="EMBL/GenBank/DDBJ databases">
        <title>Cloning whole encoding region of major royal jelly protein 2 (MRJP2) from Apis mellifera.</title>
        <authorList>
            <person name="Yoon B.S."/>
            <person name="Nguyen K.T."/>
        </authorList>
    </citation>
    <scope>NUCLEOTIDE SEQUENCE [MRNA]</scope>
</reference>
<reference key="4">
    <citation type="journal article" date="2014" name="BMC Genomics">
        <title>Finding the missing honey bee genes: lessons learned from a genome upgrade.</title>
        <authorList>
            <consortium name="HGSC production teams"/>
            <consortium name="Honey Bee Genome Sequencing Consortium"/>
            <person name="Elsik C.G."/>
            <person name="Worley K.C."/>
            <person name="Bennett A.K."/>
            <person name="Beye M."/>
            <person name="Camara F."/>
            <person name="Childers C.P."/>
            <person name="de Graaf D.C."/>
            <person name="Debyser G."/>
            <person name="Deng J."/>
            <person name="Devreese B."/>
            <person name="Elhaik E."/>
            <person name="Evans J.D."/>
            <person name="Foster L.J."/>
            <person name="Graur D."/>
            <person name="Guigo R."/>
            <person name="Hoff K.J."/>
            <person name="Holder M.E."/>
            <person name="Hudson M.E."/>
            <person name="Hunt G.J."/>
            <person name="Jiang H."/>
            <person name="Joshi V."/>
            <person name="Khetani R.S."/>
            <person name="Kosarev P."/>
            <person name="Kovar C.L."/>
            <person name="Ma J."/>
            <person name="Maleszka R."/>
            <person name="Moritz R.F."/>
            <person name="Munoz-Torres M.C."/>
            <person name="Murphy T.D."/>
            <person name="Muzny D.M."/>
            <person name="Newsham I.F."/>
            <person name="Reese J.T."/>
            <person name="Robertson H.M."/>
            <person name="Robinson G.E."/>
            <person name="Rueppell O."/>
            <person name="Solovyev V."/>
            <person name="Stanke M."/>
            <person name="Stolle E."/>
            <person name="Tsuruda J.M."/>
            <person name="Vaerenbergh M.V."/>
            <person name="Waterhouse R.M."/>
            <person name="Weaver D.B."/>
            <person name="Whitfield C.W."/>
            <person name="Wu Y."/>
            <person name="Zdobnov E.M."/>
            <person name="Zhang L."/>
            <person name="Zhu D."/>
            <person name="Gibbs R.A."/>
        </authorList>
    </citation>
    <scope>NUCLEOTIDE SEQUENCE [LARGE SCALE GENOMIC DNA]</scope>
</reference>
<reference key="5">
    <citation type="submission" date="2024-08" db="UniProtKB">
        <authorList>
            <consortium name="RefSeq"/>
        </authorList>
    </citation>
    <scope>NUCLEOTIDE SEQUENCE [LARGE SCALE GENOMIC DNA]</scope>
    <source>
        <strain>DH4</strain>
    </source>
</reference>
<reference key="6">
    <citation type="journal article" date="2004" name="J. Agric. Food Chem.">
        <title>Characterization of royal jelly proteins in both Africanized and European honeybees (Apis mellifera) by two-dimensional gel electrophoresis.</title>
        <authorList>
            <person name="Sano O."/>
            <person name="Kunikata T."/>
            <person name="Kohno K."/>
            <person name="Iwaki K."/>
            <person name="Ikeda M."/>
            <person name="Kurimoto M."/>
        </authorList>
    </citation>
    <scope>PROTEIN SEQUENCE OF 18-27</scope>
    <scope>SUBCELLULAR LOCATION</scope>
</reference>
<reference key="7">
    <citation type="journal article" date="1996" name="Biosci. Biotechnol. Biochem.">
        <title>N-linked sugar chain of 55-kDa royal jelly glycoprotein.</title>
        <authorList>
            <person name="Kimura Y."/>
            <person name="Kajiyama S."/>
            <person name="Kanaeda J."/>
            <person name="Izukawa T."/>
            <person name="Yonekura M."/>
        </authorList>
    </citation>
    <scope>STRUCTURE OF CARBOHYDRATES</scope>
</reference>
<reference key="8">
    <citation type="journal article" date="2005" name="Insect Biochem. Mol. Biol.">
        <title>Profiling the proteome complement of the secretion from hypopharyngeal gland of Africanized nurse-honeybees (Apis mellifera L.).</title>
        <authorList>
            <person name="Santos K.S."/>
            <person name="dos Santos L.D."/>
            <person name="Mendes M.A."/>
            <person name="de Souza B.M."/>
            <person name="Malaspina O."/>
            <person name="Palma M.S."/>
        </authorList>
    </citation>
    <scope>FUNCTION</scope>
    <scope>SUBCELLULAR LOCATION</scope>
    <scope>TISSUE SPECIFICITY</scope>
</reference>
<reference key="9">
    <citation type="journal article" date="2005" name="Proteomics">
        <title>Towards royal jelly proteome.</title>
        <authorList>
            <person name="Scarselli R."/>
            <person name="Donadio E."/>
            <person name="Giuffrida M.G."/>
            <person name="Fortunato D."/>
            <person name="Conti A."/>
            <person name="Balestreri E."/>
            <person name="Felicioli R."/>
            <person name="Pinzauti M."/>
            <person name="Sabatini A.G."/>
            <person name="Felicioli A."/>
        </authorList>
    </citation>
    <scope>SUBCELLULAR LOCATION</scope>
</reference>
<reference key="10">
    <citation type="journal article" date="2006" name="Genome Res.">
        <title>Evolution of the Yellow/Major Royal Jelly Protein family and the emergence of social behavior in honey bees.</title>
        <authorList>
            <person name="Drapeau M.D."/>
            <person name="Albert S."/>
            <person name="Kucharski R."/>
            <person name="Prusko C."/>
            <person name="Maleszka R."/>
        </authorList>
    </citation>
    <scope>IDENTIFICATION</scope>
</reference>
<reference key="11">
    <citation type="journal article" date="2009" name="J. Proteome Res.">
        <title>Proteomic analysis of honey bee brain upon ontogenetic and behavioral development.</title>
        <authorList>
            <person name="Garcia L."/>
            <person name="Saraiva Garcia C.H."/>
            <person name="Calabria L.K."/>
            <person name="Costa Nunes da Cruz G."/>
            <person name="Sanchez Puentes A."/>
            <person name="Bao S.N."/>
            <person name="Fontes W."/>
            <person name="Ricart C.A."/>
            <person name="Salmen Espindola F."/>
            <person name="Valle de Sousa M."/>
        </authorList>
    </citation>
    <scope>TISSUE SPECIFICITY</scope>
    <scope>DEVELOPMENTAL STAGE</scope>
    <scope>MASS SPECTROMETRY</scope>
    <scope>IDENTIFICATION BY MASS SPECTROMETRY</scope>
</reference>
<reference key="12">
    <citation type="journal article" date="2018" name="Insects">
        <title>Transcriptional Control of Honey Bee (Apis mellifera) Major Royal Jelly Proteins by 20-Hydroxyecdysone.</title>
        <authorList>
            <person name="Winkler P."/>
            <person name="Sieg F."/>
            <person name="Buttstedt A."/>
        </authorList>
    </citation>
    <scope>INDUCTION BY 20-HYDROXYECDYSONE</scope>
</reference>
<reference key="13">
    <citation type="journal article" date="2019" name="Ecol. Evol.">
        <title>The rise and fall of major royal jelly proteins during a honeybee (Apis mellifera) workers' life.</title>
        <authorList>
            <person name="Dobritzsch D."/>
            <person name="Aumer D."/>
            <person name="Fuszard M."/>
            <person name="Erler S."/>
            <person name="Buttstedt A."/>
        </authorList>
    </citation>
    <scope>FUNCTION</scope>
    <scope>SUBCELLULAR LOCATION</scope>
    <scope>TISSUE SPECIFICITY</scope>
    <scope>IDENTIFICATION BY MASS SPECTROMETRY</scope>
</reference>
<reference key="14">
    <citation type="journal article" date="2019" name="Sci. Rep.">
        <title>pH-dependent stability of honey bee (Apis mellifera) major royal jelly proteins.</title>
        <authorList>
            <person name="Muresan C.I."/>
            <person name="Buttstedt A."/>
        </authorList>
    </citation>
    <scope>BIOPHYSICOCHEMICAL PROPERTIES</scope>
</reference>
<reference key="15">
    <citation type="journal article" date="2021" name="Insects">
        <title>Upregulation of Transferrin and Major Royal Jelly Proteins in the Spermathecal Fluid of Mated Honeybee (Apis mellifera) Queens.</title>
        <authorList>
            <person name="Park H.G."/>
            <person name="Kim B.Y."/>
            <person name="Kim J.M."/>
            <person name="Choi Y.S."/>
            <person name="Yoon H.J."/>
            <person name="Lee K.S."/>
            <person name="Jin B.R."/>
        </authorList>
    </citation>
    <scope>FUNCTION</scope>
    <scope>TISSUE SPECIFICITY</scope>
</reference>
<comment type="function">
    <text evidence="4 9 10 11 15">Highly abundant protein component of royal jelly, a substance produced in the hypopharyngeal gland containing proteins, free amino acids, fatty acids, sugars and other nutrients, which is fed to developing larvae by worker nurse bees (PubMed:15607658, PubMed:31410279, PubMed:9791542). Major royal jelly proteins (MRJPs) are high in essential amino acids and probably have a nutritional function in larval food (PubMed:9791542). All larvae are fed some royal jelly (also known as worker jelly) early in their development but it forms the principal source of nutrition for larvae destined to become queen bees (Probable). Produced in the spermatheca of adult queen bees, along with other major royal jelly proteins, where it may act as a nutrient supply for sperm stored by mated queens, or be involved in energy metabolism (PubMed:34442256).</text>
</comment>
<comment type="biophysicochemical properties">
    <phDependence>
        <text evidence="8">Optimum pH for protein stability is 4.5. Protein becomes unstable at pH above 10.0.</text>
    </phDependence>
</comment>
<comment type="subcellular location">
    <subcellularLocation>
        <location evidence="3 4 5 9 11">Secreted</location>
    </subcellularLocation>
    <text evidence="3 4 5 9 11">Incorporated into royal jelly and pollen-bread.</text>
</comment>
<comment type="tissue specificity">
    <text evidence="4 6 9 10">Secreted from the hypopharyngeal glands of the worker honey bee (at protein level); expression peaks at 12 days post eclosion (PubMed:15607658, PubMed:31410279). Expressed in the brains of adult worker bees peaking at 12 days post eclosion (at protein level) (PubMed:19203288, PubMed:31410279). Expressed in the spermatheca of adult queen bees (at protein level); Expression levels are higher in mated queens than in virgin queens (PubMed:34442256).</text>
</comment>
<comment type="developmental stage">
    <text evidence="6">During the age-related subcaste transition from nurse worker bee to forager worker bee expression of major royal jelly proteins, including this one, is reduced and alpha-glucosidase is increased (at protein level).</text>
</comment>
<comment type="induction">
    <text evidence="7">Moderately down-regulated by the ecdysteroid 20-hydroxyecdysone (ecdysterone or 20E).</text>
</comment>
<comment type="PTM">
    <text evidence="16">N-linked core structure contains mannose (which consists of 8-alpha-mannosyl residues, one beta-mannosyl residue, and chitobiose).</text>
</comment>
<comment type="mass spectrometry" mass="51540.0" method="MALDI" evidence="6"/>
<comment type="similarity">
    <text evidence="15">Belongs to the major royal jelly protein family.</text>
</comment>
<name>MRJP2_APIME</name>
<protein>
    <recommendedName>
        <fullName>Major royal jelly protein 2</fullName>
        <shortName>MRJP-2</shortName>
    </recommendedName>
    <alternativeName>
        <fullName evidence="14">55 kDa RJGP</fullName>
    </alternativeName>
    <alternativeName>
        <fullName evidence="12">Apalbumin 2</fullName>
    </alternativeName>
    <alternativeName>
        <fullName>Bee-milk protein</fullName>
    </alternativeName>
</protein>
<accession>O77061</accession>
<accession>A0A7M7MQ90</accession>
<accession>A0A8B8H5P3</accession>
<accession>C6K482</accession>
<sequence length="452" mass="51074">MTRWLFMVACLGIACQGAIVRENSPRNLEKSLNVIHEWKYFDYDFGSEERRQAAIQSGEYDHTKNYPFDVDQWRDKTFVTILRYDGVPSTLNVISGKTGKGGRLLKPYPDWSFAEFKDCSKIVSAFKIAIDKFDRLWVLDSGLVNRTVPVCAPKLHVFDLKTSNHLKQIEIPHDIAVNATTGKGGLVSLAVQAIDLANTLVYMADHKGDALIVYQNADDSFHRLTSNTFDYDPRYAKMTIDGESFTLKNGICGMALSPVTNNLYYSPLASHGLYYVNTAPFMKSQFGENNVQYQGSEDILNTQSLAKAVSKNGVLFVGLVGNSAVGCWNEHQSLQRQNLEMVAQNDRTLQMIAGMKIKEELPHFVGSNKPVKDEYMLVLSNRMQKIVNDDFNFDDVNFRILGANVKELIRNTHCVNNNQNDNIQNTNNQNDNNQKNNKKNANNQKNNNQNDN</sequence>